<protein>
    <recommendedName>
        <fullName evidence="1">Leucine--tRNA ligase</fullName>
        <ecNumber evidence="1">6.1.1.4</ecNumber>
    </recommendedName>
    <alternativeName>
        <fullName evidence="1">Leucyl-tRNA synthetase</fullName>
        <shortName evidence="1">LeuRS</shortName>
    </alternativeName>
</protein>
<organism>
    <name type="scientific">Baumannia cicadellinicola subsp. Homalodisca coagulata</name>
    <dbReference type="NCBI Taxonomy" id="374463"/>
    <lineage>
        <taxon>Bacteria</taxon>
        <taxon>Pseudomonadati</taxon>
        <taxon>Pseudomonadota</taxon>
        <taxon>Gammaproteobacteria</taxon>
        <taxon>Candidatus Palibaumannia</taxon>
    </lineage>
</organism>
<accession>Q1LTM9</accession>
<reference key="1">
    <citation type="journal article" date="2006" name="PLoS Biol.">
        <title>Metabolic complementarity and genomics of the dual bacterial symbiosis of sharpshooters.</title>
        <authorList>
            <person name="Wu D."/>
            <person name="Daugherty S.C."/>
            <person name="Van Aken S.E."/>
            <person name="Pai G.H."/>
            <person name="Watkins K.L."/>
            <person name="Khouri H."/>
            <person name="Tallon L.J."/>
            <person name="Zaborsky J.M."/>
            <person name="Dunbar H.E."/>
            <person name="Tran P.L."/>
            <person name="Moran N.A."/>
            <person name="Eisen J.A."/>
        </authorList>
    </citation>
    <scope>NUCLEOTIDE SEQUENCE [LARGE SCALE GENOMIC DNA]</scope>
</reference>
<proteinExistence type="inferred from homology"/>
<name>SYL_BAUCH</name>
<evidence type="ECO:0000255" key="1">
    <source>
        <dbReference type="HAMAP-Rule" id="MF_00049"/>
    </source>
</evidence>
<gene>
    <name evidence="1" type="primary">leuS</name>
    <name type="ordered locus">BCI_0232</name>
</gene>
<dbReference type="EC" id="6.1.1.4" evidence="1"/>
<dbReference type="EMBL" id="CP000238">
    <property type="protein sequence ID" value="ABF13994.1"/>
    <property type="molecule type" value="Genomic_DNA"/>
</dbReference>
<dbReference type="RefSeq" id="WP_011520418.1">
    <property type="nucleotide sequence ID" value="NC_007984.1"/>
</dbReference>
<dbReference type="SMR" id="Q1LTM9"/>
<dbReference type="STRING" id="374463.BCI_0232"/>
<dbReference type="KEGG" id="bci:BCI_0232"/>
<dbReference type="HOGENOM" id="CLU_004427_0_0_6"/>
<dbReference type="OrthoDB" id="9810365at2"/>
<dbReference type="Proteomes" id="UP000002427">
    <property type="component" value="Chromosome"/>
</dbReference>
<dbReference type="GO" id="GO:0005829">
    <property type="term" value="C:cytosol"/>
    <property type="evidence" value="ECO:0007669"/>
    <property type="project" value="TreeGrafter"/>
</dbReference>
<dbReference type="GO" id="GO:0002161">
    <property type="term" value="F:aminoacyl-tRNA deacylase activity"/>
    <property type="evidence" value="ECO:0007669"/>
    <property type="project" value="InterPro"/>
</dbReference>
<dbReference type="GO" id="GO:0005524">
    <property type="term" value="F:ATP binding"/>
    <property type="evidence" value="ECO:0007669"/>
    <property type="project" value="UniProtKB-UniRule"/>
</dbReference>
<dbReference type="GO" id="GO:0004823">
    <property type="term" value="F:leucine-tRNA ligase activity"/>
    <property type="evidence" value="ECO:0007669"/>
    <property type="project" value="UniProtKB-UniRule"/>
</dbReference>
<dbReference type="GO" id="GO:0006429">
    <property type="term" value="P:leucyl-tRNA aminoacylation"/>
    <property type="evidence" value="ECO:0007669"/>
    <property type="project" value="UniProtKB-UniRule"/>
</dbReference>
<dbReference type="CDD" id="cd07958">
    <property type="entry name" value="Anticodon_Ia_Leu_BEm"/>
    <property type="match status" value="1"/>
</dbReference>
<dbReference type="CDD" id="cd00812">
    <property type="entry name" value="LeuRS_core"/>
    <property type="match status" value="1"/>
</dbReference>
<dbReference type="FunFam" id="1.10.730.10:FF:000002">
    <property type="entry name" value="Leucine--tRNA ligase"/>
    <property type="match status" value="1"/>
</dbReference>
<dbReference type="FunFam" id="2.20.28.290:FF:000001">
    <property type="entry name" value="Leucine--tRNA ligase"/>
    <property type="match status" value="1"/>
</dbReference>
<dbReference type="FunFam" id="3.40.50.620:FF:000003">
    <property type="entry name" value="Leucine--tRNA ligase"/>
    <property type="match status" value="1"/>
</dbReference>
<dbReference type="FunFam" id="3.40.50.620:FF:000124">
    <property type="entry name" value="Leucine--tRNA ligase"/>
    <property type="match status" value="1"/>
</dbReference>
<dbReference type="Gene3D" id="2.20.28.290">
    <property type="match status" value="1"/>
</dbReference>
<dbReference type="Gene3D" id="3.10.20.590">
    <property type="match status" value="1"/>
</dbReference>
<dbReference type="Gene3D" id="3.40.50.620">
    <property type="entry name" value="HUPs"/>
    <property type="match status" value="2"/>
</dbReference>
<dbReference type="Gene3D" id="1.10.730.10">
    <property type="entry name" value="Isoleucyl-tRNA Synthetase, Domain 1"/>
    <property type="match status" value="1"/>
</dbReference>
<dbReference type="Gene3D" id="3.90.740.10">
    <property type="entry name" value="Valyl/Leucyl/Isoleucyl-tRNA synthetase, editing domain"/>
    <property type="match status" value="1"/>
</dbReference>
<dbReference type="HAMAP" id="MF_00049_B">
    <property type="entry name" value="Leu_tRNA_synth_B"/>
    <property type="match status" value="1"/>
</dbReference>
<dbReference type="InterPro" id="IPR001412">
    <property type="entry name" value="aa-tRNA-synth_I_CS"/>
</dbReference>
<dbReference type="InterPro" id="IPR002300">
    <property type="entry name" value="aa-tRNA-synth_Ia"/>
</dbReference>
<dbReference type="InterPro" id="IPR002302">
    <property type="entry name" value="Leu-tRNA-ligase"/>
</dbReference>
<dbReference type="InterPro" id="IPR025709">
    <property type="entry name" value="Leu_tRNA-synth_edit"/>
</dbReference>
<dbReference type="InterPro" id="IPR013155">
    <property type="entry name" value="M/V/L/I-tRNA-synth_anticd-bd"/>
</dbReference>
<dbReference type="InterPro" id="IPR015413">
    <property type="entry name" value="Methionyl/Leucyl_tRNA_Synth"/>
</dbReference>
<dbReference type="InterPro" id="IPR014729">
    <property type="entry name" value="Rossmann-like_a/b/a_fold"/>
</dbReference>
<dbReference type="InterPro" id="IPR009080">
    <property type="entry name" value="tRNAsynth_Ia_anticodon-bd"/>
</dbReference>
<dbReference type="InterPro" id="IPR009008">
    <property type="entry name" value="Val/Leu/Ile-tRNA-synth_edit"/>
</dbReference>
<dbReference type="NCBIfam" id="TIGR00396">
    <property type="entry name" value="leuS_bact"/>
    <property type="match status" value="1"/>
</dbReference>
<dbReference type="PANTHER" id="PTHR43740:SF2">
    <property type="entry name" value="LEUCINE--TRNA LIGASE, MITOCHONDRIAL"/>
    <property type="match status" value="1"/>
</dbReference>
<dbReference type="PANTHER" id="PTHR43740">
    <property type="entry name" value="LEUCYL-TRNA SYNTHETASE"/>
    <property type="match status" value="1"/>
</dbReference>
<dbReference type="Pfam" id="PF08264">
    <property type="entry name" value="Anticodon_1"/>
    <property type="match status" value="1"/>
</dbReference>
<dbReference type="Pfam" id="PF00133">
    <property type="entry name" value="tRNA-synt_1"/>
    <property type="match status" value="2"/>
</dbReference>
<dbReference type="Pfam" id="PF13603">
    <property type="entry name" value="tRNA-synt_1_2"/>
    <property type="match status" value="1"/>
</dbReference>
<dbReference type="Pfam" id="PF09334">
    <property type="entry name" value="tRNA-synt_1g"/>
    <property type="match status" value="1"/>
</dbReference>
<dbReference type="PRINTS" id="PR00985">
    <property type="entry name" value="TRNASYNTHLEU"/>
</dbReference>
<dbReference type="SUPFAM" id="SSF47323">
    <property type="entry name" value="Anticodon-binding domain of a subclass of class I aminoacyl-tRNA synthetases"/>
    <property type="match status" value="1"/>
</dbReference>
<dbReference type="SUPFAM" id="SSF52374">
    <property type="entry name" value="Nucleotidylyl transferase"/>
    <property type="match status" value="1"/>
</dbReference>
<dbReference type="SUPFAM" id="SSF50677">
    <property type="entry name" value="ValRS/IleRS/LeuRS editing domain"/>
    <property type="match status" value="1"/>
</dbReference>
<dbReference type="PROSITE" id="PS00178">
    <property type="entry name" value="AA_TRNA_LIGASE_I"/>
    <property type="match status" value="1"/>
</dbReference>
<comment type="catalytic activity">
    <reaction evidence="1">
        <text>tRNA(Leu) + L-leucine + ATP = L-leucyl-tRNA(Leu) + AMP + diphosphate</text>
        <dbReference type="Rhea" id="RHEA:11688"/>
        <dbReference type="Rhea" id="RHEA-COMP:9613"/>
        <dbReference type="Rhea" id="RHEA-COMP:9622"/>
        <dbReference type="ChEBI" id="CHEBI:30616"/>
        <dbReference type="ChEBI" id="CHEBI:33019"/>
        <dbReference type="ChEBI" id="CHEBI:57427"/>
        <dbReference type="ChEBI" id="CHEBI:78442"/>
        <dbReference type="ChEBI" id="CHEBI:78494"/>
        <dbReference type="ChEBI" id="CHEBI:456215"/>
        <dbReference type="EC" id="6.1.1.4"/>
    </reaction>
</comment>
<comment type="subcellular location">
    <subcellularLocation>
        <location evidence="1">Cytoplasm</location>
    </subcellularLocation>
</comment>
<comment type="similarity">
    <text evidence="1">Belongs to the class-I aminoacyl-tRNA synthetase family.</text>
</comment>
<sequence length="861" mass="99335">MQEFYDPKNIESTIQQYWHENNTFTVTEDFSKEKYYCLSMLPYPSGNLHMGHVRNYTIGDVLSRYHRMLGKNVMQPIGWDAFGLPAERAALKNQTAPATWTYANIETMKKQLKQLGFSYDWSREITTCRPEYYRWEQWFFIQLYEKGLVYKKTSFVNWCSNDQTVLANEQVIDGCCWRCGAPIMLKDIPQWFLKITAYADQLLHDLDKLDGWPEQIKNMQRNWIGRSEGINITFQVIDMKETLTIYTTRPDTLMGVTYLSIAINHHLAQQAANNNRLLSDFIEHSRPTKLSEAEIVKVNRVKTGIFTGLYAIHPLTEEKLPIWVTNFVLMDYGTGAIMAVPGHDQRDWDFARQYNLPVKNIIRNIDGSKPTISGIIPEGILYNSGEFNGLRSLEASKIITDILVARGIGETKVNYRLRDWVISRQRYWGTPIPMMTLEDGTVVPTPVDQLPVILPEYLLINSISNPLKDDHLWMKTNYNNNIATRETDTFDTFMESSWYYARYTCPNYDQGMLDTTAANYWLPIDQYIGGIEHAIMHLMYFRFYHKLLRDAGMLTSDEPTIRILCQGMVLADSFYYISCTTGERIWVSPINVRVQRDEKGNIINAIDLQGHHLVYAGTIKMSKSKNNSIDPLTMVEKYGADTIRLFIMFASPVTMALEWRESGVEGANRFLKRLWKLTYDHIQRGKVIKLDLAAMSNDNKILRRELHQTIAKVTDDISRRYAFNTAIAALMEITNKLMHASYHSQQDRAIVQEALLAVVRMLYPFTPHLCFKLWQALNGEGDIDNAPWPIVDQLALVEDTNLIVIQINGRFRSKIIVPVSADKALIIERASKEKLVAKYLEGTKVQKIIYVPGKLLNLVLK</sequence>
<keyword id="KW-0030">Aminoacyl-tRNA synthetase</keyword>
<keyword id="KW-0067">ATP-binding</keyword>
<keyword id="KW-0963">Cytoplasm</keyword>
<keyword id="KW-0436">Ligase</keyword>
<keyword id="KW-0547">Nucleotide-binding</keyword>
<keyword id="KW-0648">Protein biosynthesis</keyword>
<keyword id="KW-1185">Reference proteome</keyword>
<feature type="chain" id="PRO_1000009296" description="Leucine--tRNA ligase">
    <location>
        <begin position="1"/>
        <end position="861"/>
    </location>
</feature>
<feature type="short sequence motif" description="'HIGH' region">
    <location>
        <begin position="42"/>
        <end position="52"/>
    </location>
</feature>
<feature type="short sequence motif" description="'KMSKS' region">
    <location>
        <begin position="620"/>
        <end position="624"/>
    </location>
</feature>
<feature type="binding site" evidence="1">
    <location>
        <position position="623"/>
    </location>
    <ligand>
        <name>ATP</name>
        <dbReference type="ChEBI" id="CHEBI:30616"/>
    </ligand>
</feature>